<name>TPCA_ASPFU</name>
<protein>
    <recommendedName>
        <fullName evidence="7">O-methyltransferase tpcA</fullName>
        <ecNumber evidence="11">2.1.1.-</ecNumber>
    </recommendedName>
    <alternativeName>
        <fullName evidence="7">Trypacidin synthesis protein A</fullName>
    </alternativeName>
</protein>
<reference key="1">
    <citation type="journal article" date="2005" name="Nature">
        <title>Genomic sequence of the pathogenic and allergenic filamentous fungus Aspergillus fumigatus.</title>
        <authorList>
            <person name="Nierman W.C."/>
            <person name="Pain A."/>
            <person name="Anderson M.J."/>
            <person name="Wortman J.R."/>
            <person name="Kim H.S."/>
            <person name="Arroyo J."/>
            <person name="Berriman M."/>
            <person name="Abe K."/>
            <person name="Archer D.B."/>
            <person name="Bermejo C."/>
            <person name="Bennett J.W."/>
            <person name="Bowyer P."/>
            <person name="Chen D."/>
            <person name="Collins M."/>
            <person name="Coulsen R."/>
            <person name="Davies R."/>
            <person name="Dyer P.S."/>
            <person name="Farman M.L."/>
            <person name="Fedorova N."/>
            <person name="Fedorova N.D."/>
            <person name="Feldblyum T.V."/>
            <person name="Fischer R."/>
            <person name="Fosker N."/>
            <person name="Fraser A."/>
            <person name="Garcia J.L."/>
            <person name="Garcia M.J."/>
            <person name="Goble A."/>
            <person name="Goldman G.H."/>
            <person name="Gomi K."/>
            <person name="Griffith-Jones S."/>
            <person name="Gwilliam R."/>
            <person name="Haas B.J."/>
            <person name="Haas H."/>
            <person name="Harris D.E."/>
            <person name="Horiuchi H."/>
            <person name="Huang J."/>
            <person name="Humphray S."/>
            <person name="Jimenez J."/>
            <person name="Keller N."/>
            <person name="Khouri H."/>
            <person name="Kitamoto K."/>
            <person name="Kobayashi T."/>
            <person name="Konzack S."/>
            <person name="Kulkarni R."/>
            <person name="Kumagai T."/>
            <person name="Lafton A."/>
            <person name="Latge J.-P."/>
            <person name="Li W."/>
            <person name="Lord A."/>
            <person name="Lu C."/>
            <person name="Majoros W.H."/>
            <person name="May G.S."/>
            <person name="Miller B.L."/>
            <person name="Mohamoud Y."/>
            <person name="Molina M."/>
            <person name="Monod M."/>
            <person name="Mouyna I."/>
            <person name="Mulligan S."/>
            <person name="Murphy L.D."/>
            <person name="O'Neil S."/>
            <person name="Paulsen I."/>
            <person name="Penalva M.A."/>
            <person name="Pertea M."/>
            <person name="Price C."/>
            <person name="Pritchard B.L."/>
            <person name="Quail M.A."/>
            <person name="Rabbinowitsch E."/>
            <person name="Rawlins N."/>
            <person name="Rajandream M.A."/>
            <person name="Reichard U."/>
            <person name="Renauld H."/>
            <person name="Robson G.D."/>
            <person name="Rodriguez de Cordoba S."/>
            <person name="Rodriguez-Pena J.M."/>
            <person name="Ronning C.M."/>
            <person name="Rutter S."/>
            <person name="Salzberg S.L."/>
            <person name="Sanchez M."/>
            <person name="Sanchez-Ferrero J.C."/>
            <person name="Saunders D."/>
            <person name="Seeger K."/>
            <person name="Squares R."/>
            <person name="Squares S."/>
            <person name="Takeuchi M."/>
            <person name="Tekaia F."/>
            <person name="Turner G."/>
            <person name="Vazquez de Aldana C.R."/>
            <person name="Weidman J."/>
            <person name="White O."/>
            <person name="Woodward J.R."/>
            <person name="Yu J.-H."/>
            <person name="Fraser C.M."/>
            <person name="Galagan J.E."/>
            <person name="Asai K."/>
            <person name="Machida M."/>
            <person name="Hall N."/>
            <person name="Barrell B.G."/>
            <person name="Denning D.W."/>
        </authorList>
    </citation>
    <scope>NUCLEOTIDE SEQUENCE [LARGE SCALE GENOMIC DNA]</scope>
    <source>
        <strain>ATCC MYA-4609 / CBS 101355 / FGSC A1100 / Af293</strain>
    </source>
</reference>
<reference key="2">
    <citation type="journal article" date="2012" name="PLoS ONE">
        <title>Trypacidin, a spore-borne toxin from Aspergillus fumigatus, is cytotoxic to lung cells.</title>
        <authorList>
            <person name="Gauthier T."/>
            <person name="Wang X."/>
            <person name="Sifuentes Dos Santos J."/>
            <person name="Fysikopoulos A."/>
            <person name="Tadrist S."/>
            <person name="Canlet C."/>
            <person name="Artigot M.P."/>
            <person name="Loiseau N."/>
            <person name="Oswald I.P."/>
            <person name="Puel O."/>
        </authorList>
    </citation>
    <scope>FUNCTION</scope>
    <scope>TISSUE SPECIFICITY</scope>
</reference>
<reference key="3">
    <citation type="journal article" date="2015" name="Appl. Microbiol. Biotechnol.">
        <title>Identification of the antiphagocytic trypacidin gene cluster in the human-pathogenic fungus Aspergillus fumigatus.</title>
        <authorList>
            <person name="Mattern D.J."/>
            <person name="Schoeler H."/>
            <person name="Weber J."/>
            <person name="Novohradska S."/>
            <person name="Kraibooj K."/>
            <person name="Dahse H.M."/>
            <person name="Hillmann F."/>
            <person name="Valiante V."/>
            <person name="Figge M.T."/>
            <person name="Brakhage A.A."/>
        </authorList>
    </citation>
    <scope>FUNCTION</scope>
</reference>
<reference key="4">
    <citation type="journal article" date="2016" name="Environ. Microbiol.">
        <title>Redundant synthesis of a conidial polyketide by two distinct secondary metabolite clusters in Aspergillus fumigatus.</title>
        <authorList>
            <person name="Throckmorton K."/>
            <person name="Lim F.Y."/>
            <person name="Kontoyiannis D.P."/>
            <person name="Zheng W."/>
            <person name="Keller N.P."/>
        </authorList>
    </citation>
    <scope>FUNCTION</scope>
    <scope>DISRUPTION PHENOTYPE</scope>
</reference>
<keyword id="KW-0489">Methyltransferase</keyword>
<keyword id="KW-1185">Reference proteome</keyword>
<keyword id="KW-0949">S-adenosyl-L-methionine</keyword>
<keyword id="KW-0808">Transferase</keyword>
<proteinExistence type="evidence at transcript level"/>
<accession>Q4WQZ7</accession>
<evidence type="ECO:0000250" key="1">
    <source>
        <dbReference type="UniProtKB" id="O04385"/>
    </source>
</evidence>
<evidence type="ECO:0000250" key="2">
    <source>
        <dbReference type="UniProtKB" id="Q0CCX9"/>
    </source>
</evidence>
<evidence type="ECO:0000255" key="3">
    <source>
        <dbReference type="PROSITE-ProRule" id="PRU01020"/>
    </source>
</evidence>
<evidence type="ECO:0000269" key="4">
    <source>
    </source>
</evidence>
<evidence type="ECO:0000269" key="5">
    <source>
    </source>
</evidence>
<evidence type="ECO:0000269" key="6">
    <source>
    </source>
</evidence>
<evidence type="ECO:0000303" key="7">
    <source>
    </source>
</evidence>
<evidence type="ECO:0000303" key="8">
    <source>
    </source>
</evidence>
<evidence type="ECO:0000305" key="9"/>
<evidence type="ECO:0000305" key="10">
    <source>
    </source>
</evidence>
<evidence type="ECO:0000305" key="11">
    <source>
    </source>
</evidence>
<organism>
    <name type="scientific">Aspergillus fumigatus (strain ATCC MYA-4609 / CBS 101355 / FGSC A1100 / Af293)</name>
    <name type="common">Neosartorya fumigata</name>
    <dbReference type="NCBI Taxonomy" id="330879"/>
    <lineage>
        <taxon>Eukaryota</taxon>
        <taxon>Fungi</taxon>
        <taxon>Dikarya</taxon>
        <taxon>Ascomycota</taxon>
        <taxon>Pezizomycotina</taxon>
        <taxon>Eurotiomycetes</taxon>
        <taxon>Eurotiomycetidae</taxon>
        <taxon>Eurotiales</taxon>
        <taxon>Aspergillaceae</taxon>
        <taxon>Aspergillus</taxon>
        <taxon>Aspergillus subgen. Fumigati</taxon>
    </lineage>
</organism>
<gene>
    <name evidence="7" type="primary">tpcA</name>
    <name evidence="8" type="synonym">tynA</name>
    <name type="ORF">AFUA_4G14580</name>
</gene>
<dbReference type="EC" id="2.1.1.-" evidence="11"/>
<dbReference type="EMBL" id="AAHF01000005">
    <property type="protein sequence ID" value="EAL89337.1"/>
    <property type="molecule type" value="Genomic_DNA"/>
</dbReference>
<dbReference type="RefSeq" id="XP_751375.1">
    <property type="nucleotide sequence ID" value="XM_746282.1"/>
</dbReference>
<dbReference type="SMR" id="Q4WQZ7"/>
<dbReference type="STRING" id="330879.Q4WQZ7"/>
<dbReference type="EnsemblFungi" id="EAL89337">
    <property type="protein sequence ID" value="EAL89337"/>
    <property type="gene ID" value="AFUA_4G14580"/>
</dbReference>
<dbReference type="GeneID" id="3509593"/>
<dbReference type="KEGG" id="afm:AFUA_4G14580"/>
<dbReference type="VEuPathDB" id="FungiDB:Afu4g14580"/>
<dbReference type="eggNOG" id="KOG3178">
    <property type="taxonomic scope" value="Eukaryota"/>
</dbReference>
<dbReference type="HOGENOM" id="CLU_005533_0_1_1"/>
<dbReference type="InParanoid" id="Q4WQZ7"/>
<dbReference type="OMA" id="ENDHFAN"/>
<dbReference type="OrthoDB" id="1606438at2759"/>
<dbReference type="Proteomes" id="UP000002530">
    <property type="component" value="Chromosome 4"/>
</dbReference>
<dbReference type="GO" id="GO:0008171">
    <property type="term" value="F:O-methyltransferase activity"/>
    <property type="evidence" value="ECO:0007669"/>
    <property type="project" value="InterPro"/>
</dbReference>
<dbReference type="GO" id="GO:0046983">
    <property type="term" value="F:protein dimerization activity"/>
    <property type="evidence" value="ECO:0007669"/>
    <property type="project" value="InterPro"/>
</dbReference>
<dbReference type="GO" id="GO:0032259">
    <property type="term" value="P:methylation"/>
    <property type="evidence" value="ECO:0007669"/>
    <property type="project" value="UniProtKB-KW"/>
</dbReference>
<dbReference type="GO" id="GO:0044550">
    <property type="term" value="P:secondary metabolite biosynthetic process"/>
    <property type="evidence" value="ECO:0000317"/>
    <property type="project" value="AspGD"/>
</dbReference>
<dbReference type="Gene3D" id="3.40.50.150">
    <property type="entry name" value="Vaccinia Virus protein VP39"/>
    <property type="match status" value="1"/>
</dbReference>
<dbReference type="Gene3D" id="1.10.10.10">
    <property type="entry name" value="Winged helix-like DNA-binding domain superfamily/Winged helix DNA-binding domain"/>
    <property type="match status" value="1"/>
</dbReference>
<dbReference type="InterPro" id="IPR016461">
    <property type="entry name" value="COMT-like"/>
</dbReference>
<dbReference type="InterPro" id="IPR001077">
    <property type="entry name" value="O_MeTrfase_dom"/>
</dbReference>
<dbReference type="InterPro" id="IPR012967">
    <property type="entry name" value="Plant_O-MeTrfase_dimerisation"/>
</dbReference>
<dbReference type="InterPro" id="IPR029063">
    <property type="entry name" value="SAM-dependent_MTases_sf"/>
</dbReference>
<dbReference type="InterPro" id="IPR036388">
    <property type="entry name" value="WH-like_DNA-bd_sf"/>
</dbReference>
<dbReference type="InterPro" id="IPR036390">
    <property type="entry name" value="WH_DNA-bd_sf"/>
</dbReference>
<dbReference type="PANTHER" id="PTHR43712:SF2">
    <property type="entry name" value="O-METHYLTRANSFERASE CICE"/>
    <property type="match status" value="1"/>
</dbReference>
<dbReference type="PANTHER" id="PTHR43712">
    <property type="entry name" value="PUTATIVE (AFU_ORTHOLOGUE AFUA_4G14580)-RELATED"/>
    <property type="match status" value="1"/>
</dbReference>
<dbReference type="Pfam" id="PF08100">
    <property type="entry name" value="Dimerisation"/>
    <property type="match status" value="1"/>
</dbReference>
<dbReference type="Pfam" id="PF00891">
    <property type="entry name" value="Methyltransf_2"/>
    <property type="match status" value="1"/>
</dbReference>
<dbReference type="SUPFAM" id="SSF53335">
    <property type="entry name" value="S-adenosyl-L-methionine-dependent methyltransferases"/>
    <property type="match status" value="1"/>
</dbReference>
<dbReference type="SUPFAM" id="SSF46785">
    <property type="entry name" value="Winged helix' DNA-binding domain"/>
    <property type="match status" value="1"/>
</dbReference>
<dbReference type="PROSITE" id="PS51683">
    <property type="entry name" value="SAM_OMT_II"/>
    <property type="match status" value="1"/>
</dbReference>
<sequence length="482" mass="53244">MERQPKSLCDATQLLETANIISDTVQTIIAEWSAEAKAPQGSGKQNAPMLPSRELFDAQRTILAAVGKLTELVSDPSARILEVATQFQESRSLYIAAERRIPDLLAAGDEGGVHIDQISQKAKIEPRKLARILRYLCSIGIFKQTGPDTFANNRISAALVSNEPLRAYVQLVNSEGFTASDRLPHTLLHPDTGPSYDVAKTAWQNAVCTKKTRWEWLEERVAPEQLLESGGHYPGIPSLVMGLPPREDDGLVARPELEIMGLSMVGGGRVFGTAHVYDFPWASLGDALVVDVGGGVGGFPLQLSKVYPQLRFIVQDRGPVVKQGLEKVWPRENPEALHQGRVQFVEHSFFDTNPTEGADIYFLRYVLHDWSDDYCVRILAAIRSSMAAHSRLLICDQVMNTTIGDPDLDSAPSPLPANYGYHTRFSHSRDITMMSCINGIERTPAEFKGLLQAAGLKLKKIWDCRSQVSLIEAVLPEMNGFR</sequence>
<comment type="function">
    <text evidence="2 4 5 6">O-methyltransferase; part of the gene cluster that mediates the biosynthesis of trypacidin, a mycotoxin with antiprotozoal activity and that plays a role in the infection process (PubMed:26242966, PubMed:26278536). The pathway begins with the synthesis of atrochrysone thioester by the polyketide synthase (PKS) tpcC (PubMed:26242966). The atrochrysone carboxyl ACP thioesterase tpcB then breaks the thioester bond and releases the atrochrysone carboxylic acid from tpcC (PubMed:26242966). The decarboxylase tpcK converts atrochrysone carboxylic acid to atrochrysone which is further reduced into emodin anthrone (PubMed:26242966). The next step is performed by the emodin anthrone oxygenase tpcL that catalyzes the oxidation of emodinanthrone to emodin (PubMed:26242966). Emodin O-methyltransferase encoded by tpcA catalyzes methylation of the 8-hydroxy group of emodin to form questin (PubMed:26242966). Ring cleavage of questin by questin oxidase tpcI leads to desmethylsulochrin via several intermediates including questin epoxide (By similarity). Another methylation step catalyzed by tpcM leads to the formation of sulochrin which is further converted to monomethylsulfochrin by tpcH. Finally, the tpcJ catalyzes the conversion of monomethylsulfochrin to trypacidin (PubMed:26242966). Trypacidin is toxic for human pulmonary and bronchial epithelial cells by initiating the intracellular formation of nitric oxide (NO) and hydrogen peroxide (H(2)O(2)), thus triggering host necrotic cell death (PubMed:22319557). The trypacidin pathway is also able to produce endocrocin via a distinct route from the endocrocin Enc pathway (PubMed:26242966).</text>
</comment>
<comment type="pathway">
    <text evidence="5">Secondary metabolite biosynthesis.</text>
</comment>
<comment type="tissue specificity">
    <text evidence="10">Specifically expressed in conidia (PubMed:22319557).</text>
</comment>
<comment type="disruption phenotype">
    <text evidence="5">Resulted in loss of trypacidin production (PubMed:26242966).</text>
</comment>
<comment type="similarity">
    <text evidence="9">Belongs to the class I-like SAM-binding methyltransferase superfamily. Cation-independent O-methyltransferase family.</text>
</comment>
<feature type="chain" id="PRO_0000437066" description="O-methyltransferase tpcA">
    <location>
        <begin position="1"/>
        <end position="482"/>
    </location>
</feature>
<feature type="active site" description="Proton acceptor" evidence="3">
    <location>
        <position position="368"/>
    </location>
</feature>
<feature type="binding site" evidence="1">
    <location>
        <begin position="293"/>
        <end position="294"/>
    </location>
    <ligand>
        <name>S-adenosyl-L-methionine</name>
        <dbReference type="ChEBI" id="CHEBI:59789"/>
    </ligand>
</feature>
<feature type="binding site" evidence="3">
    <location>
        <position position="316"/>
    </location>
    <ligand>
        <name>S-adenosyl-L-methionine</name>
        <dbReference type="ChEBI" id="CHEBI:59789"/>
    </ligand>
</feature>
<feature type="binding site" evidence="1">
    <location>
        <begin position="348"/>
        <end position="349"/>
    </location>
    <ligand>
        <name>S-adenosyl-L-methionine</name>
        <dbReference type="ChEBI" id="CHEBI:59789"/>
    </ligand>
</feature>
<feature type="binding site" evidence="1">
    <location>
        <position position="364"/>
    </location>
    <ligand>
        <name>S-adenosyl-L-methionine</name>
        <dbReference type="ChEBI" id="CHEBI:59789"/>
    </ligand>
</feature>